<sequence>MFRIGQGFDVHQFVEGRPLIIGGVHIPYEKGLLGHSDADVLLHAVADACLGAIGAGDIGRHFPDTDPRYKDADSAELLAHVWSLVRQEGYVLVNADCTIIAQKPKMAPYIEEMKKVIARLLEAERSQVNVKATTTEKLGFTGREEGVAAQVVVLLQKSEA</sequence>
<gene>
    <name evidence="1" type="primary">ispF</name>
    <name type="ordered locus">GTNG_0082</name>
</gene>
<reference key="1">
    <citation type="journal article" date="2007" name="Proc. Natl. Acad. Sci. U.S.A.">
        <title>Genome and proteome of long-chain alkane degrading Geobacillus thermodenitrificans NG80-2 isolated from a deep-subsurface oil reservoir.</title>
        <authorList>
            <person name="Feng L."/>
            <person name="Wang W."/>
            <person name="Cheng J."/>
            <person name="Ren Y."/>
            <person name="Zhao G."/>
            <person name="Gao C."/>
            <person name="Tang Y."/>
            <person name="Liu X."/>
            <person name="Han W."/>
            <person name="Peng X."/>
            <person name="Liu R."/>
            <person name="Wang L."/>
        </authorList>
    </citation>
    <scope>NUCLEOTIDE SEQUENCE [LARGE SCALE GENOMIC DNA]</scope>
    <source>
        <strain>NG80-2</strain>
    </source>
</reference>
<accession>A4IJG5</accession>
<organism>
    <name type="scientific">Geobacillus thermodenitrificans (strain NG80-2)</name>
    <dbReference type="NCBI Taxonomy" id="420246"/>
    <lineage>
        <taxon>Bacteria</taxon>
        <taxon>Bacillati</taxon>
        <taxon>Bacillota</taxon>
        <taxon>Bacilli</taxon>
        <taxon>Bacillales</taxon>
        <taxon>Anoxybacillaceae</taxon>
        <taxon>Geobacillus</taxon>
    </lineage>
</organism>
<name>ISPF_GEOTN</name>
<comment type="function">
    <text evidence="1">Involved in the biosynthesis of isopentenyl diphosphate (IPP) and dimethylallyl diphosphate (DMAPP), two major building blocks of isoprenoid compounds. Catalyzes the conversion of 4-diphosphocytidyl-2-C-methyl-D-erythritol 2-phosphate (CDP-ME2P) to 2-C-methyl-D-erythritol 2,4-cyclodiphosphate (ME-CPP) with a corresponding release of cytidine 5-monophosphate (CMP).</text>
</comment>
<comment type="catalytic activity">
    <reaction evidence="1">
        <text>4-CDP-2-C-methyl-D-erythritol 2-phosphate = 2-C-methyl-D-erythritol 2,4-cyclic diphosphate + CMP</text>
        <dbReference type="Rhea" id="RHEA:23864"/>
        <dbReference type="ChEBI" id="CHEBI:57919"/>
        <dbReference type="ChEBI" id="CHEBI:58483"/>
        <dbReference type="ChEBI" id="CHEBI:60377"/>
        <dbReference type="EC" id="4.6.1.12"/>
    </reaction>
</comment>
<comment type="cofactor">
    <cofactor evidence="1">
        <name>a divalent metal cation</name>
        <dbReference type="ChEBI" id="CHEBI:60240"/>
    </cofactor>
    <text evidence="1">Binds 1 divalent metal cation per subunit.</text>
</comment>
<comment type="pathway">
    <text evidence="1">Isoprenoid biosynthesis; isopentenyl diphosphate biosynthesis via DXP pathway; isopentenyl diphosphate from 1-deoxy-D-xylulose 5-phosphate: step 4/6.</text>
</comment>
<comment type="subunit">
    <text evidence="1">Homotrimer.</text>
</comment>
<comment type="similarity">
    <text evidence="1">Belongs to the IspF family.</text>
</comment>
<keyword id="KW-0414">Isoprene biosynthesis</keyword>
<keyword id="KW-0456">Lyase</keyword>
<keyword id="KW-0479">Metal-binding</keyword>
<evidence type="ECO:0000255" key="1">
    <source>
        <dbReference type="HAMAP-Rule" id="MF_00107"/>
    </source>
</evidence>
<feature type="chain" id="PRO_1000022842" description="2-C-methyl-D-erythritol 2,4-cyclodiphosphate synthase">
    <location>
        <begin position="1"/>
        <end position="160"/>
    </location>
</feature>
<feature type="binding site" evidence="1">
    <location>
        <begin position="9"/>
        <end position="11"/>
    </location>
    <ligand>
        <name>4-CDP-2-C-methyl-D-erythritol 2-phosphate</name>
        <dbReference type="ChEBI" id="CHEBI:57919"/>
    </ligand>
</feature>
<feature type="binding site" evidence="1">
    <location>
        <position position="9"/>
    </location>
    <ligand>
        <name>a divalent metal cation</name>
        <dbReference type="ChEBI" id="CHEBI:60240"/>
    </ligand>
</feature>
<feature type="binding site" evidence="1">
    <location>
        <position position="11"/>
    </location>
    <ligand>
        <name>a divalent metal cation</name>
        <dbReference type="ChEBI" id="CHEBI:60240"/>
    </ligand>
</feature>
<feature type="binding site" evidence="1">
    <location>
        <begin position="35"/>
        <end position="36"/>
    </location>
    <ligand>
        <name>4-CDP-2-C-methyl-D-erythritol 2-phosphate</name>
        <dbReference type="ChEBI" id="CHEBI:57919"/>
    </ligand>
</feature>
<feature type="binding site" evidence="1">
    <location>
        <position position="43"/>
    </location>
    <ligand>
        <name>a divalent metal cation</name>
        <dbReference type="ChEBI" id="CHEBI:60240"/>
    </ligand>
</feature>
<feature type="binding site" evidence="1">
    <location>
        <begin position="57"/>
        <end position="59"/>
    </location>
    <ligand>
        <name>4-CDP-2-C-methyl-D-erythritol 2-phosphate</name>
        <dbReference type="ChEBI" id="CHEBI:57919"/>
    </ligand>
</feature>
<feature type="binding site" evidence="1">
    <location>
        <begin position="62"/>
        <end position="66"/>
    </location>
    <ligand>
        <name>4-CDP-2-C-methyl-D-erythritol 2-phosphate</name>
        <dbReference type="ChEBI" id="CHEBI:57919"/>
    </ligand>
</feature>
<feature type="binding site" evidence="1">
    <location>
        <begin position="101"/>
        <end position="107"/>
    </location>
    <ligand>
        <name>4-CDP-2-C-methyl-D-erythritol 2-phosphate</name>
        <dbReference type="ChEBI" id="CHEBI:57919"/>
    </ligand>
</feature>
<feature type="binding site" evidence="1">
    <location>
        <begin position="133"/>
        <end position="136"/>
    </location>
    <ligand>
        <name>4-CDP-2-C-methyl-D-erythritol 2-phosphate</name>
        <dbReference type="ChEBI" id="CHEBI:57919"/>
    </ligand>
</feature>
<feature type="binding site" evidence="1">
    <location>
        <position position="140"/>
    </location>
    <ligand>
        <name>4-CDP-2-C-methyl-D-erythritol 2-phosphate</name>
        <dbReference type="ChEBI" id="CHEBI:57919"/>
    </ligand>
</feature>
<feature type="binding site" evidence="1">
    <location>
        <position position="143"/>
    </location>
    <ligand>
        <name>4-CDP-2-C-methyl-D-erythritol 2-phosphate</name>
        <dbReference type="ChEBI" id="CHEBI:57919"/>
    </ligand>
</feature>
<feature type="site" description="Transition state stabilizer" evidence="1">
    <location>
        <position position="35"/>
    </location>
</feature>
<feature type="site" description="Transition state stabilizer" evidence="1">
    <location>
        <position position="134"/>
    </location>
</feature>
<proteinExistence type="inferred from homology"/>
<dbReference type="EC" id="4.6.1.12" evidence="1"/>
<dbReference type="EMBL" id="CP000557">
    <property type="protein sequence ID" value="ABO65469.1"/>
    <property type="molecule type" value="Genomic_DNA"/>
</dbReference>
<dbReference type="RefSeq" id="WP_008882045.1">
    <property type="nucleotide sequence ID" value="NC_009328.1"/>
</dbReference>
<dbReference type="SMR" id="A4IJG5"/>
<dbReference type="KEGG" id="gtn:GTNG_0082"/>
<dbReference type="eggNOG" id="COG0245">
    <property type="taxonomic scope" value="Bacteria"/>
</dbReference>
<dbReference type="HOGENOM" id="CLU_084630_2_0_9"/>
<dbReference type="UniPathway" id="UPA00056">
    <property type="reaction ID" value="UER00095"/>
</dbReference>
<dbReference type="Proteomes" id="UP000001578">
    <property type="component" value="Chromosome"/>
</dbReference>
<dbReference type="GO" id="GO:0008685">
    <property type="term" value="F:2-C-methyl-D-erythritol 2,4-cyclodiphosphate synthase activity"/>
    <property type="evidence" value="ECO:0007669"/>
    <property type="project" value="UniProtKB-UniRule"/>
</dbReference>
<dbReference type="GO" id="GO:0046872">
    <property type="term" value="F:metal ion binding"/>
    <property type="evidence" value="ECO:0007669"/>
    <property type="project" value="UniProtKB-KW"/>
</dbReference>
<dbReference type="GO" id="GO:0019288">
    <property type="term" value="P:isopentenyl diphosphate biosynthetic process, methylerythritol 4-phosphate pathway"/>
    <property type="evidence" value="ECO:0007669"/>
    <property type="project" value="UniProtKB-UniRule"/>
</dbReference>
<dbReference type="GO" id="GO:0016114">
    <property type="term" value="P:terpenoid biosynthetic process"/>
    <property type="evidence" value="ECO:0007669"/>
    <property type="project" value="InterPro"/>
</dbReference>
<dbReference type="CDD" id="cd00554">
    <property type="entry name" value="MECDP_synthase"/>
    <property type="match status" value="1"/>
</dbReference>
<dbReference type="FunFam" id="3.30.1330.50:FF:000001">
    <property type="entry name" value="2-C-methyl-D-erythritol 2,4-cyclodiphosphate synthase"/>
    <property type="match status" value="1"/>
</dbReference>
<dbReference type="Gene3D" id="3.30.1330.50">
    <property type="entry name" value="2-C-methyl-D-erythritol 2,4-cyclodiphosphate synthase"/>
    <property type="match status" value="1"/>
</dbReference>
<dbReference type="HAMAP" id="MF_00107">
    <property type="entry name" value="IspF"/>
    <property type="match status" value="1"/>
</dbReference>
<dbReference type="InterPro" id="IPR003526">
    <property type="entry name" value="MECDP_synthase"/>
</dbReference>
<dbReference type="InterPro" id="IPR020555">
    <property type="entry name" value="MECDP_synthase_CS"/>
</dbReference>
<dbReference type="InterPro" id="IPR036571">
    <property type="entry name" value="MECDP_synthase_sf"/>
</dbReference>
<dbReference type="NCBIfam" id="TIGR00151">
    <property type="entry name" value="ispF"/>
    <property type="match status" value="1"/>
</dbReference>
<dbReference type="PANTHER" id="PTHR43181">
    <property type="entry name" value="2-C-METHYL-D-ERYTHRITOL 2,4-CYCLODIPHOSPHATE SYNTHASE, CHLOROPLASTIC"/>
    <property type="match status" value="1"/>
</dbReference>
<dbReference type="PANTHER" id="PTHR43181:SF1">
    <property type="entry name" value="2-C-METHYL-D-ERYTHRITOL 2,4-CYCLODIPHOSPHATE SYNTHASE, CHLOROPLASTIC"/>
    <property type="match status" value="1"/>
</dbReference>
<dbReference type="Pfam" id="PF02542">
    <property type="entry name" value="YgbB"/>
    <property type="match status" value="1"/>
</dbReference>
<dbReference type="SUPFAM" id="SSF69765">
    <property type="entry name" value="IpsF-like"/>
    <property type="match status" value="1"/>
</dbReference>
<dbReference type="PROSITE" id="PS01350">
    <property type="entry name" value="ISPF"/>
    <property type="match status" value="1"/>
</dbReference>
<protein>
    <recommendedName>
        <fullName evidence="1">2-C-methyl-D-erythritol 2,4-cyclodiphosphate synthase</fullName>
        <shortName evidence="1">MECDP-synthase</shortName>
        <shortName evidence="1">MECPP-synthase</shortName>
        <shortName evidence="1">MECPS</shortName>
        <ecNumber evidence="1">4.6.1.12</ecNumber>
    </recommendedName>
</protein>